<dbReference type="EMBL" id="AM747720">
    <property type="protein sequence ID" value="CAR50547.1"/>
    <property type="molecule type" value="Genomic_DNA"/>
</dbReference>
<dbReference type="RefSeq" id="WP_004199275.1">
    <property type="nucleotide sequence ID" value="NC_011000.1"/>
</dbReference>
<dbReference type="SMR" id="B4E5C2"/>
<dbReference type="GeneID" id="98107158"/>
<dbReference type="KEGG" id="bcj:BCAL0236"/>
<dbReference type="eggNOG" id="COG0089">
    <property type="taxonomic scope" value="Bacteria"/>
</dbReference>
<dbReference type="HOGENOM" id="CLU_037562_3_1_4"/>
<dbReference type="BioCyc" id="BCEN216591:G1G1V-279-MONOMER"/>
<dbReference type="Proteomes" id="UP000001035">
    <property type="component" value="Chromosome 1"/>
</dbReference>
<dbReference type="GO" id="GO:1990904">
    <property type="term" value="C:ribonucleoprotein complex"/>
    <property type="evidence" value="ECO:0007669"/>
    <property type="project" value="UniProtKB-KW"/>
</dbReference>
<dbReference type="GO" id="GO:0005840">
    <property type="term" value="C:ribosome"/>
    <property type="evidence" value="ECO:0007669"/>
    <property type="project" value="UniProtKB-KW"/>
</dbReference>
<dbReference type="GO" id="GO:0019843">
    <property type="term" value="F:rRNA binding"/>
    <property type="evidence" value="ECO:0007669"/>
    <property type="project" value="UniProtKB-UniRule"/>
</dbReference>
<dbReference type="GO" id="GO:0003735">
    <property type="term" value="F:structural constituent of ribosome"/>
    <property type="evidence" value="ECO:0007669"/>
    <property type="project" value="InterPro"/>
</dbReference>
<dbReference type="GO" id="GO:0006412">
    <property type="term" value="P:translation"/>
    <property type="evidence" value="ECO:0007669"/>
    <property type="project" value="UniProtKB-UniRule"/>
</dbReference>
<dbReference type="FunFam" id="3.30.70.330:FF:000001">
    <property type="entry name" value="50S ribosomal protein L23"/>
    <property type="match status" value="1"/>
</dbReference>
<dbReference type="Gene3D" id="3.30.70.330">
    <property type="match status" value="1"/>
</dbReference>
<dbReference type="HAMAP" id="MF_01369_B">
    <property type="entry name" value="Ribosomal_uL23_B"/>
    <property type="match status" value="1"/>
</dbReference>
<dbReference type="InterPro" id="IPR012677">
    <property type="entry name" value="Nucleotide-bd_a/b_plait_sf"/>
</dbReference>
<dbReference type="InterPro" id="IPR013025">
    <property type="entry name" value="Ribosomal_uL23-like"/>
</dbReference>
<dbReference type="InterPro" id="IPR012678">
    <property type="entry name" value="Ribosomal_uL23/eL15/eS24_sf"/>
</dbReference>
<dbReference type="NCBIfam" id="NF004359">
    <property type="entry name" value="PRK05738.1-3"/>
    <property type="match status" value="1"/>
</dbReference>
<dbReference type="NCBIfam" id="NF004363">
    <property type="entry name" value="PRK05738.2-4"/>
    <property type="match status" value="1"/>
</dbReference>
<dbReference type="PANTHER" id="PTHR11620">
    <property type="entry name" value="60S RIBOSOMAL PROTEIN L23A"/>
    <property type="match status" value="1"/>
</dbReference>
<dbReference type="Pfam" id="PF00276">
    <property type="entry name" value="Ribosomal_L23"/>
    <property type="match status" value="1"/>
</dbReference>
<dbReference type="SUPFAM" id="SSF54189">
    <property type="entry name" value="Ribosomal proteins S24e, L23 and L15e"/>
    <property type="match status" value="1"/>
</dbReference>
<proteinExistence type="inferred from homology"/>
<keyword id="KW-0687">Ribonucleoprotein</keyword>
<keyword id="KW-0689">Ribosomal protein</keyword>
<keyword id="KW-0694">RNA-binding</keyword>
<keyword id="KW-0699">rRNA-binding</keyword>
<comment type="function">
    <text evidence="1">One of the early assembly proteins it binds 23S rRNA. One of the proteins that surrounds the polypeptide exit tunnel on the outside of the ribosome. Forms the main docking site for trigger factor binding to the ribosome.</text>
</comment>
<comment type="subunit">
    <text evidence="1">Part of the 50S ribosomal subunit. Contacts protein L29, and trigger factor when it is bound to the ribosome.</text>
</comment>
<comment type="similarity">
    <text evidence="1">Belongs to the universal ribosomal protein uL23 family.</text>
</comment>
<reference key="1">
    <citation type="journal article" date="2009" name="J. Bacteriol.">
        <title>The genome of Burkholderia cenocepacia J2315, an epidemic pathogen of cystic fibrosis patients.</title>
        <authorList>
            <person name="Holden M.T."/>
            <person name="Seth-Smith H.M."/>
            <person name="Crossman L.C."/>
            <person name="Sebaihia M."/>
            <person name="Bentley S.D."/>
            <person name="Cerdeno-Tarraga A.M."/>
            <person name="Thomson N.R."/>
            <person name="Bason N."/>
            <person name="Quail M.A."/>
            <person name="Sharp S."/>
            <person name="Cherevach I."/>
            <person name="Churcher C."/>
            <person name="Goodhead I."/>
            <person name="Hauser H."/>
            <person name="Holroyd N."/>
            <person name="Mungall K."/>
            <person name="Scott P."/>
            <person name="Walker D."/>
            <person name="White B."/>
            <person name="Rose H."/>
            <person name="Iversen P."/>
            <person name="Mil-Homens D."/>
            <person name="Rocha E.P."/>
            <person name="Fialho A.M."/>
            <person name="Baldwin A."/>
            <person name="Dowson C."/>
            <person name="Barrell B.G."/>
            <person name="Govan J.R."/>
            <person name="Vandamme P."/>
            <person name="Hart C.A."/>
            <person name="Mahenthiralingam E."/>
            <person name="Parkhill J."/>
        </authorList>
    </citation>
    <scope>NUCLEOTIDE SEQUENCE [LARGE SCALE GENOMIC DNA]</scope>
    <source>
        <strain>ATCC BAA-245 / DSM 16553 / LMG 16656 / NCTC 13227 / J2315 / CF5610</strain>
    </source>
</reference>
<organism>
    <name type="scientific">Burkholderia cenocepacia (strain ATCC BAA-245 / DSM 16553 / LMG 16656 / NCTC 13227 / J2315 / CF5610)</name>
    <name type="common">Burkholderia cepacia (strain J2315)</name>
    <dbReference type="NCBI Taxonomy" id="216591"/>
    <lineage>
        <taxon>Bacteria</taxon>
        <taxon>Pseudomonadati</taxon>
        <taxon>Pseudomonadota</taxon>
        <taxon>Betaproteobacteria</taxon>
        <taxon>Burkholderiales</taxon>
        <taxon>Burkholderiaceae</taxon>
        <taxon>Burkholderia</taxon>
        <taxon>Burkholderia cepacia complex</taxon>
    </lineage>
</organism>
<sequence length="104" mass="11740">MSEIRKNDHRLMQVLLAPVISEKATLVADKNEQVVFEVAPDATKQEVKAAVELLFKVEVDSVNVLVQKGKQKRFGRSMGRRKDVKKAYVCLKPGQEINFEAEAK</sequence>
<protein>
    <recommendedName>
        <fullName evidence="1">Large ribosomal subunit protein uL23</fullName>
    </recommendedName>
    <alternativeName>
        <fullName evidence="2">50S ribosomal protein L23</fullName>
    </alternativeName>
</protein>
<name>RL23_BURCJ</name>
<accession>B4E5C2</accession>
<feature type="chain" id="PRO_1000144540" description="Large ribosomal subunit protein uL23">
    <location>
        <begin position="1"/>
        <end position="104"/>
    </location>
</feature>
<gene>
    <name evidence="1" type="primary">rplW</name>
    <name type="ordered locus">BceJ2315_02390</name>
    <name type="ORF">BCAL0236</name>
</gene>
<evidence type="ECO:0000255" key="1">
    <source>
        <dbReference type="HAMAP-Rule" id="MF_01369"/>
    </source>
</evidence>
<evidence type="ECO:0000305" key="2"/>